<organism>
    <name type="scientific">Treponema pallidum subsp. pallidum (strain SS14)</name>
    <dbReference type="NCBI Taxonomy" id="455434"/>
    <lineage>
        <taxon>Bacteria</taxon>
        <taxon>Pseudomonadati</taxon>
        <taxon>Spirochaetota</taxon>
        <taxon>Spirochaetia</taxon>
        <taxon>Spirochaetales</taxon>
        <taxon>Treponemataceae</taxon>
        <taxon>Treponema</taxon>
    </lineage>
</organism>
<proteinExistence type="inferred from homology"/>
<feature type="chain" id="PRO_1000142897" description="Large ribosomal subunit protein uL15">
    <location>
        <begin position="1"/>
        <end position="153"/>
    </location>
</feature>
<feature type="region of interest" description="Disordered" evidence="2">
    <location>
        <begin position="15"/>
        <end position="42"/>
    </location>
</feature>
<feature type="compositionally biased region" description="Gly residues" evidence="2">
    <location>
        <begin position="23"/>
        <end position="35"/>
    </location>
</feature>
<protein>
    <recommendedName>
        <fullName evidence="1">Large ribosomal subunit protein uL15</fullName>
    </recommendedName>
    <alternativeName>
        <fullName evidence="3">50S ribosomal protein L15</fullName>
    </alternativeName>
</protein>
<sequence length="153" mass="16603">MADFHLIAPKGANRARRIVGRGSSSGRGTTSGRGTKGQQARAGHKAYVGFEGGQMPLYRRVPRRGFSNCAFKKEYAVVNVGALEFVYAPGETVNRQTLIEKGLVKGRVPFIKILADGELTKSIVVRVDRVSARAQEKIQQAGGSVECIEAQER</sequence>
<accession>B2S2F5</accession>
<evidence type="ECO:0000255" key="1">
    <source>
        <dbReference type="HAMAP-Rule" id="MF_01341"/>
    </source>
</evidence>
<evidence type="ECO:0000256" key="2">
    <source>
        <dbReference type="SAM" id="MobiDB-lite"/>
    </source>
</evidence>
<evidence type="ECO:0000305" key="3"/>
<name>RL15_TREPS</name>
<keyword id="KW-0687">Ribonucleoprotein</keyword>
<keyword id="KW-0689">Ribosomal protein</keyword>
<keyword id="KW-0694">RNA-binding</keyword>
<keyword id="KW-0699">rRNA-binding</keyword>
<reference key="1">
    <citation type="journal article" date="2008" name="BMC Microbiol.">
        <title>Complete genome sequence of Treponema pallidum ssp. pallidum strain SS14 determined with oligonucleotide arrays.</title>
        <authorList>
            <person name="Matejkova P."/>
            <person name="Strouhal M."/>
            <person name="Smajs D."/>
            <person name="Norris S.J."/>
            <person name="Palzkill T."/>
            <person name="Petrosino J.F."/>
            <person name="Sodergren E."/>
            <person name="Norton J.E."/>
            <person name="Singh J."/>
            <person name="Richmond T.A."/>
            <person name="Molla M.N."/>
            <person name="Albert T.J."/>
            <person name="Weinstock G.M."/>
        </authorList>
    </citation>
    <scope>NUCLEOTIDE SEQUENCE [LARGE SCALE GENOMIC DNA]</scope>
    <source>
        <strain>SS14</strain>
    </source>
</reference>
<dbReference type="EMBL" id="CP000805">
    <property type="protein sequence ID" value="ACD70634.1"/>
    <property type="molecule type" value="Genomic_DNA"/>
</dbReference>
<dbReference type="RefSeq" id="WP_010881655.1">
    <property type="nucleotide sequence ID" value="NC_021508.1"/>
</dbReference>
<dbReference type="SMR" id="B2S2F5"/>
<dbReference type="GeneID" id="93875995"/>
<dbReference type="KEGG" id="tpp:TPASS_0207"/>
<dbReference type="PATRIC" id="fig|455434.6.peg.211"/>
<dbReference type="Proteomes" id="UP000001202">
    <property type="component" value="Chromosome"/>
</dbReference>
<dbReference type="GO" id="GO:0022625">
    <property type="term" value="C:cytosolic large ribosomal subunit"/>
    <property type="evidence" value="ECO:0007669"/>
    <property type="project" value="TreeGrafter"/>
</dbReference>
<dbReference type="GO" id="GO:0019843">
    <property type="term" value="F:rRNA binding"/>
    <property type="evidence" value="ECO:0007669"/>
    <property type="project" value="UniProtKB-UniRule"/>
</dbReference>
<dbReference type="GO" id="GO:0003735">
    <property type="term" value="F:structural constituent of ribosome"/>
    <property type="evidence" value="ECO:0007669"/>
    <property type="project" value="InterPro"/>
</dbReference>
<dbReference type="GO" id="GO:0006412">
    <property type="term" value="P:translation"/>
    <property type="evidence" value="ECO:0007669"/>
    <property type="project" value="UniProtKB-UniRule"/>
</dbReference>
<dbReference type="Gene3D" id="3.100.10.10">
    <property type="match status" value="1"/>
</dbReference>
<dbReference type="HAMAP" id="MF_01341">
    <property type="entry name" value="Ribosomal_uL15"/>
    <property type="match status" value="1"/>
</dbReference>
<dbReference type="InterPro" id="IPR030878">
    <property type="entry name" value="Ribosomal_uL15"/>
</dbReference>
<dbReference type="InterPro" id="IPR021131">
    <property type="entry name" value="Ribosomal_uL15/eL18"/>
</dbReference>
<dbReference type="InterPro" id="IPR036227">
    <property type="entry name" value="Ribosomal_uL15/eL18_sf"/>
</dbReference>
<dbReference type="InterPro" id="IPR005749">
    <property type="entry name" value="Ribosomal_uL15_bac-type"/>
</dbReference>
<dbReference type="InterPro" id="IPR001196">
    <property type="entry name" value="Ribosomal_uL15_CS"/>
</dbReference>
<dbReference type="NCBIfam" id="TIGR01071">
    <property type="entry name" value="rplO_bact"/>
    <property type="match status" value="1"/>
</dbReference>
<dbReference type="PANTHER" id="PTHR12934">
    <property type="entry name" value="50S RIBOSOMAL PROTEIN L15"/>
    <property type="match status" value="1"/>
</dbReference>
<dbReference type="PANTHER" id="PTHR12934:SF11">
    <property type="entry name" value="LARGE RIBOSOMAL SUBUNIT PROTEIN UL15M"/>
    <property type="match status" value="1"/>
</dbReference>
<dbReference type="Pfam" id="PF00828">
    <property type="entry name" value="Ribosomal_L27A"/>
    <property type="match status" value="1"/>
</dbReference>
<dbReference type="SUPFAM" id="SSF52080">
    <property type="entry name" value="Ribosomal proteins L15p and L18e"/>
    <property type="match status" value="1"/>
</dbReference>
<dbReference type="PROSITE" id="PS00475">
    <property type="entry name" value="RIBOSOMAL_L15"/>
    <property type="match status" value="1"/>
</dbReference>
<gene>
    <name evidence="1" type="primary">rplO</name>
    <name type="ordered locus">TPASS_0207</name>
</gene>
<comment type="function">
    <text evidence="1">Binds to the 23S rRNA.</text>
</comment>
<comment type="subunit">
    <text evidence="1">Part of the 50S ribosomal subunit.</text>
</comment>
<comment type="similarity">
    <text evidence="1">Belongs to the universal ribosomal protein uL15 family.</text>
</comment>